<name>LIMK2_RAT</name>
<sequence>MAALAGEEAWRCRGCGNYVPLSQRLYRTANEAWHSSCFRCSECQESLTNWYYEKDGKLYCHKDYWAKFGEFCHGCSLLMTGPAMVAGEFKYHPECFACMSCKVIIEDGDAYALVQHATLYCGKCHNEVVLAPMFERLSTESVQDQLPYSVTLISMPATTECRRGFSVSVESASSNYATTVQVKEVNRMHISPNNRNAIHPGDRILEINGTPVRTLRVEEVEDAINQTSQTLQLLIEHDPVPQRLDQLRLDTRLSPHMQSSGHTLMLSTLDAKENQEGTLRRRSLRRSNSISKSPGPSSPKEPLLLSRDISRSESLRCSSSYSQQIFRPCDLIHGEVLGKGFFGQAIKVTHKATGKVMVMKELIRCDEETQKTFLTEVKVMRSLDHPNVLKFIGVLYKDKKLNLLTEYIEGGTLKDFLRNVDPFPWQQKVRFAKGIASGMAYLHSMCIIHRDLNSHNCLIKLDKTVVVADFGLSRLIVEERKRPPVEKAATKKRTLRKSDRKKRYTVVGNPYWMAPEMLNGKSYDETVDVFSFGIVLCEIIGQVYADPDCLPRTLDFGLNVKLFWEKFVPTDCPPAFFPLAAICCKLEPESRPAFSKLEDSFEALSLFLGELAIPLPAELEELDHTVSMEYGLTRDSPP</sequence>
<feature type="chain" id="PRO_0000075811" description="LIM domain kinase 2">
    <location>
        <begin position="1"/>
        <end position="638"/>
    </location>
</feature>
<feature type="domain" description="LIM zinc-binding 1" evidence="3">
    <location>
        <begin position="12"/>
        <end position="63"/>
    </location>
</feature>
<feature type="domain" description="LIM zinc-binding 2" evidence="3">
    <location>
        <begin position="72"/>
        <end position="124"/>
    </location>
</feature>
<feature type="domain" description="PDZ" evidence="4">
    <location>
        <begin position="152"/>
        <end position="239"/>
    </location>
</feature>
<feature type="domain" description="Protein kinase" evidence="5">
    <location>
        <begin position="331"/>
        <end position="608"/>
    </location>
</feature>
<feature type="region of interest" description="Disordered" evidence="6">
    <location>
        <begin position="257"/>
        <end position="304"/>
    </location>
</feature>
<feature type="compositionally biased region" description="Polar residues" evidence="6">
    <location>
        <begin position="257"/>
        <end position="266"/>
    </location>
</feature>
<feature type="compositionally biased region" description="Basic and acidic residues" evidence="6">
    <location>
        <begin position="270"/>
        <end position="279"/>
    </location>
</feature>
<feature type="compositionally biased region" description="Low complexity" evidence="6">
    <location>
        <begin position="286"/>
        <end position="304"/>
    </location>
</feature>
<feature type="active site" evidence="1">
    <location>
        <position position="451"/>
    </location>
</feature>
<feature type="binding site" evidence="5">
    <location>
        <begin position="337"/>
        <end position="345"/>
    </location>
    <ligand>
        <name>ATP</name>
        <dbReference type="ChEBI" id="CHEBI:30616"/>
    </ligand>
</feature>
<feature type="binding site" evidence="5">
    <location>
        <position position="360"/>
    </location>
    <ligand>
        <name>ATP</name>
        <dbReference type="ChEBI" id="CHEBI:30616"/>
    </ligand>
</feature>
<feature type="modified residue" description="Phosphothreonine" evidence="1">
    <location>
        <position position="210"/>
    </location>
</feature>
<feature type="modified residue" description="Phosphoserine" evidence="1">
    <location>
        <position position="293"/>
    </location>
</feature>
<feature type="modified residue" description="Phosphoserine" evidence="1">
    <location>
        <position position="298"/>
    </location>
</feature>
<feature type="modified residue" description="Phosphothreonine; by ROCK1 and CDC42BP" evidence="1">
    <location>
        <position position="505"/>
    </location>
</feature>
<feature type="splice variant" id="VSP_003128" description="In isoform LIMK2B, isoform LIMK2C and isoform LIMK2D." evidence="7">
    <original>MAALAGEEAWRCRGCGNYVPLSQRLYRTANEAWHSSC</original>
    <variation>MGSYLSVPAYFTSRDP</variation>
    <location>
        <begin position="1"/>
        <end position="37"/>
    </location>
</feature>
<feature type="splice variant" id="VSP_003131" description="In isoform LIMK2D." evidence="7">
    <location>
        <begin position="185"/>
        <end position="638"/>
    </location>
</feature>
<feature type="splice variant" id="VSP_003129" description="In isoform LIMK2C." evidence="7">
    <original>VTHKATGKVMVMKELIRCDEETQK</original>
    <variation>SWEGGSGDSQSHRQSDGHEGVNSL</variation>
    <location>
        <begin position="348"/>
        <end position="371"/>
    </location>
</feature>
<feature type="splice variant" id="VSP_003130" description="In isoform LIMK2C." evidence="7">
    <location>
        <begin position="372"/>
        <end position="638"/>
    </location>
</feature>
<proteinExistence type="evidence at transcript level"/>
<comment type="function">
    <text evidence="1">Serine/threonine-protein kinase that plays an essential role in the regulation of actin filament dynamics. Acts downstream of several Rho family GTPase signal transduction pathways. Involved in astral microtubule organization and mitotic spindle orientation during early stages of mitosis by mediating phosphorylation of TPPP. Displays serine/threonine-specific phosphorylation of myelin basic protein and histone (MBP) in vitro. Suppresses ciliogenesis via multiple pathways; phosphorylation of CFL1, directional trafficking of ciliary vesicles to the ciliary base, and by facilitating YAP1 nuclear localization where it acts as a transcriptional corepressor of the TEAD4 target genes AURKA and PLK1 (By similarity).</text>
</comment>
<comment type="catalytic activity">
    <reaction evidence="1">
        <text>L-seryl-[protein] + ATP = O-phospho-L-seryl-[protein] + ADP + H(+)</text>
        <dbReference type="Rhea" id="RHEA:17989"/>
        <dbReference type="Rhea" id="RHEA-COMP:9863"/>
        <dbReference type="Rhea" id="RHEA-COMP:11604"/>
        <dbReference type="ChEBI" id="CHEBI:15378"/>
        <dbReference type="ChEBI" id="CHEBI:29999"/>
        <dbReference type="ChEBI" id="CHEBI:30616"/>
        <dbReference type="ChEBI" id="CHEBI:83421"/>
        <dbReference type="ChEBI" id="CHEBI:456216"/>
        <dbReference type="EC" id="2.7.11.1"/>
    </reaction>
    <physiologicalReaction direction="left-to-right" evidence="1">
        <dbReference type="Rhea" id="RHEA:17990"/>
    </physiologicalReaction>
</comment>
<comment type="catalytic activity">
    <reaction evidence="1">
        <text>L-threonyl-[protein] + ATP = O-phospho-L-threonyl-[protein] + ADP + H(+)</text>
        <dbReference type="Rhea" id="RHEA:46608"/>
        <dbReference type="Rhea" id="RHEA-COMP:11060"/>
        <dbReference type="Rhea" id="RHEA-COMP:11605"/>
        <dbReference type="ChEBI" id="CHEBI:15378"/>
        <dbReference type="ChEBI" id="CHEBI:30013"/>
        <dbReference type="ChEBI" id="CHEBI:30616"/>
        <dbReference type="ChEBI" id="CHEBI:61977"/>
        <dbReference type="ChEBI" id="CHEBI:456216"/>
        <dbReference type="EC" id="2.7.11.1"/>
    </reaction>
    <physiologicalReaction direction="left-to-right" evidence="1">
        <dbReference type="Rhea" id="RHEA:46609"/>
    </physiologicalReaction>
</comment>
<comment type="subunit">
    <text evidence="1 2">Binds ROCK1 and MARF1 (By similarity). Interacts with NISCH (By similarity).</text>
</comment>
<comment type="subcellular location">
    <molecule>Isoform LIMK2A</molecule>
    <subcellularLocation>
        <location evidence="1">Cytoplasm</location>
    </subcellularLocation>
    <subcellularLocation>
        <location evidence="1">Nucleus</location>
    </subcellularLocation>
</comment>
<comment type="subcellular location">
    <molecule>Isoform LIMK2B</molecule>
    <subcellularLocation>
        <location evidence="1">Cytoplasm</location>
    </subcellularLocation>
    <subcellularLocation>
        <location evidence="1">Cytoplasm</location>
        <location evidence="1">Perinuclear region</location>
    </subcellularLocation>
    <subcellularLocation>
        <location evidence="1">Nucleus</location>
    </subcellularLocation>
</comment>
<comment type="subcellular location">
    <subcellularLocation>
        <location evidence="1">Cytoplasm</location>
        <location evidence="1">Cytoskeleton</location>
        <location evidence="1">Spindle</location>
    </subcellularLocation>
    <subcellularLocation>
        <location evidence="1">Cytoplasm</location>
        <location evidence="1">Cytoskeleton</location>
        <location evidence="1">Microtubule organizing center</location>
        <location evidence="1">Centrosome</location>
    </subcellularLocation>
</comment>
<comment type="alternative products">
    <event type="alternative splicing"/>
    <isoform>
        <id>P53670-1</id>
        <name>LIMK2A</name>
        <sequence type="displayed"/>
    </isoform>
    <isoform>
        <id>P53670-2</id>
        <name>LIMK2B</name>
        <sequence type="described" ref="VSP_003128"/>
    </isoform>
    <isoform>
        <id>P53670-3</id>
        <name>LIMK2C</name>
        <sequence type="described" ref="VSP_003128 VSP_003129 VSP_003130"/>
    </isoform>
    <isoform>
        <id>P53670-4</id>
        <name>LIMK2D</name>
        <sequence type="described" ref="VSP_003128 VSP_003131"/>
    </isoform>
</comment>
<comment type="tissue specificity">
    <text>Found in various tissues at moderate levels, except for testis, which shows very low expression.</text>
</comment>
<comment type="PTM">
    <text evidence="1">Phosphorylated on serine and/or threonine residues by ROCK1.</text>
</comment>
<comment type="similarity">
    <text evidence="8">Belongs to the protein kinase superfamily. TKL Ser/Thr protein kinase family.</text>
</comment>
<organism>
    <name type="scientific">Rattus norvegicus</name>
    <name type="common">Rat</name>
    <dbReference type="NCBI Taxonomy" id="10116"/>
    <lineage>
        <taxon>Eukaryota</taxon>
        <taxon>Metazoa</taxon>
        <taxon>Chordata</taxon>
        <taxon>Craniata</taxon>
        <taxon>Vertebrata</taxon>
        <taxon>Euteleostomi</taxon>
        <taxon>Mammalia</taxon>
        <taxon>Eutheria</taxon>
        <taxon>Euarchontoglires</taxon>
        <taxon>Glires</taxon>
        <taxon>Rodentia</taxon>
        <taxon>Myomorpha</taxon>
        <taxon>Muroidea</taxon>
        <taxon>Muridae</taxon>
        <taxon>Murinae</taxon>
        <taxon>Rattus</taxon>
    </lineage>
</organism>
<keyword id="KW-0025">Alternative splicing</keyword>
<keyword id="KW-0067">ATP-binding</keyword>
<keyword id="KW-0963">Cytoplasm</keyword>
<keyword id="KW-0206">Cytoskeleton</keyword>
<keyword id="KW-0418">Kinase</keyword>
<keyword id="KW-0440">LIM domain</keyword>
<keyword id="KW-0479">Metal-binding</keyword>
<keyword id="KW-0547">Nucleotide-binding</keyword>
<keyword id="KW-0539">Nucleus</keyword>
<keyword id="KW-0597">Phosphoprotein</keyword>
<keyword id="KW-1185">Reference proteome</keyword>
<keyword id="KW-0677">Repeat</keyword>
<keyword id="KW-0723">Serine/threonine-protein kinase</keyword>
<keyword id="KW-0808">Transferase</keyword>
<keyword id="KW-0862">Zinc</keyword>
<dbReference type="EC" id="2.7.11.1" evidence="1"/>
<dbReference type="EMBL" id="D31874">
    <property type="protein sequence ID" value="BAA06673.1"/>
    <property type="molecule type" value="mRNA"/>
</dbReference>
<dbReference type="EMBL" id="D31875">
    <property type="protein sequence ID" value="BAA06674.1"/>
    <property type="molecule type" value="mRNA"/>
</dbReference>
<dbReference type="EMBL" id="D31876">
    <property type="protein sequence ID" value="BAA06675.1"/>
    <property type="molecule type" value="mRNA"/>
</dbReference>
<dbReference type="EMBL" id="D31877">
    <property type="protein sequence ID" value="BAA06676.1"/>
    <property type="molecule type" value="mRNA"/>
</dbReference>
<dbReference type="PIR" id="I78846">
    <property type="entry name" value="I78846"/>
</dbReference>
<dbReference type="PIR" id="I78847">
    <property type="entry name" value="I78847"/>
</dbReference>
<dbReference type="PIR" id="I78848">
    <property type="entry name" value="I78848"/>
</dbReference>
<dbReference type="RefSeq" id="NP_077049.2">
    <molecule id="P53670-1"/>
    <property type="nucleotide sequence ID" value="NM_024135.3"/>
</dbReference>
<dbReference type="RefSeq" id="XP_006251298.1">
    <molecule id="P53670-2"/>
    <property type="nucleotide sequence ID" value="XM_006251236.5"/>
</dbReference>
<dbReference type="SMR" id="P53670"/>
<dbReference type="FunCoup" id="P53670">
    <property type="interactions" value="2604"/>
</dbReference>
<dbReference type="IntAct" id="P53670">
    <property type="interactions" value="1"/>
</dbReference>
<dbReference type="STRING" id="10116.ENSRNOP00000026032"/>
<dbReference type="iPTMnet" id="P53670"/>
<dbReference type="PhosphoSitePlus" id="P53670"/>
<dbReference type="PaxDb" id="10116-ENSRNOP00000026032"/>
<dbReference type="Ensembl" id="ENSRNOT00000026032.7">
    <molecule id="P53670-1"/>
    <property type="protein sequence ID" value="ENSRNOP00000026032.3"/>
    <property type="gene ID" value="ENSRNOG00000019000.9"/>
</dbReference>
<dbReference type="GeneID" id="29524"/>
<dbReference type="KEGG" id="rno:29524"/>
<dbReference type="UCSC" id="RGD:62056">
    <molecule id="P53670-1"/>
    <property type="organism name" value="rat"/>
</dbReference>
<dbReference type="AGR" id="RGD:62056"/>
<dbReference type="CTD" id="3985"/>
<dbReference type="RGD" id="62056">
    <property type="gene designation" value="Limk2"/>
</dbReference>
<dbReference type="eggNOG" id="KOG1187">
    <property type="taxonomic scope" value="Eukaryota"/>
</dbReference>
<dbReference type="GeneTree" id="ENSGT00940000159133"/>
<dbReference type="HOGENOM" id="CLU_110071_0_0_1"/>
<dbReference type="InParanoid" id="P53670"/>
<dbReference type="PhylomeDB" id="P53670"/>
<dbReference type="TreeFam" id="TF318014"/>
<dbReference type="BRENDA" id="2.7.10.2">
    <property type="organism ID" value="5301"/>
</dbReference>
<dbReference type="PRO" id="PR:P53670"/>
<dbReference type="Proteomes" id="UP000002494">
    <property type="component" value="Chromosome 14"/>
</dbReference>
<dbReference type="Bgee" id="ENSRNOG00000019000">
    <property type="expression patterns" value="Expressed in esophagus and 20 other cell types or tissues"/>
</dbReference>
<dbReference type="ExpressionAtlas" id="P53670">
    <property type="expression patterns" value="baseline and differential"/>
</dbReference>
<dbReference type="GO" id="GO:0005813">
    <property type="term" value="C:centrosome"/>
    <property type="evidence" value="ECO:0000250"/>
    <property type="project" value="UniProtKB"/>
</dbReference>
<dbReference type="GO" id="GO:0005801">
    <property type="term" value="C:cis-Golgi network"/>
    <property type="evidence" value="ECO:0000266"/>
    <property type="project" value="RGD"/>
</dbReference>
<dbReference type="GO" id="GO:0005737">
    <property type="term" value="C:cytoplasm"/>
    <property type="evidence" value="ECO:0000266"/>
    <property type="project" value="RGD"/>
</dbReference>
<dbReference type="GO" id="GO:0005829">
    <property type="term" value="C:cytosol"/>
    <property type="evidence" value="ECO:0000304"/>
    <property type="project" value="Reactome"/>
</dbReference>
<dbReference type="GO" id="GO:0072686">
    <property type="term" value="C:mitotic spindle"/>
    <property type="evidence" value="ECO:0000250"/>
    <property type="project" value="UniProtKB"/>
</dbReference>
<dbReference type="GO" id="GO:0005634">
    <property type="term" value="C:nucleus"/>
    <property type="evidence" value="ECO:0000266"/>
    <property type="project" value="RGD"/>
</dbReference>
<dbReference type="GO" id="GO:0048471">
    <property type="term" value="C:perinuclear region of cytoplasm"/>
    <property type="evidence" value="ECO:0007669"/>
    <property type="project" value="UniProtKB-SubCell"/>
</dbReference>
<dbReference type="GO" id="GO:0005524">
    <property type="term" value="F:ATP binding"/>
    <property type="evidence" value="ECO:0007669"/>
    <property type="project" value="UniProtKB-KW"/>
</dbReference>
<dbReference type="GO" id="GO:0046872">
    <property type="term" value="F:metal ion binding"/>
    <property type="evidence" value="ECO:0007669"/>
    <property type="project" value="UniProtKB-KW"/>
</dbReference>
<dbReference type="GO" id="GO:0004672">
    <property type="term" value="F:protein kinase activity"/>
    <property type="evidence" value="ECO:0000266"/>
    <property type="project" value="RGD"/>
</dbReference>
<dbReference type="GO" id="GO:0106310">
    <property type="term" value="F:protein serine kinase activity"/>
    <property type="evidence" value="ECO:0007669"/>
    <property type="project" value="RHEA"/>
</dbReference>
<dbReference type="GO" id="GO:0004674">
    <property type="term" value="F:protein serine/threonine kinase activity"/>
    <property type="evidence" value="ECO:0000314"/>
    <property type="project" value="RGD"/>
</dbReference>
<dbReference type="GO" id="GO:0030036">
    <property type="term" value="P:actin cytoskeleton organization"/>
    <property type="evidence" value="ECO:0000318"/>
    <property type="project" value="GO_Central"/>
</dbReference>
<dbReference type="GO" id="GO:0030953">
    <property type="term" value="P:astral microtubule organization"/>
    <property type="evidence" value="ECO:0000250"/>
    <property type="project" value="UniProtKB"/>
</dbReference>
<dbReference type="GO" id="GO:0061303">
    <property type="term" value="P:cornea development in camera-type eye"/>
    <property type="evidence" value="ECO:0000266"/>
    <property type="project" value="RGD"/>
</dbReference>
<dbReference type="GO" id="GO:0051650">
    <property type="term" value="P:establishment of vesicle localization"/>
    <property type="evidence" value="ECO:0000250"/>
    <property type="project" value="UniProtKB"/>
</dbReference>
<dbReference type="GO" id="GO:0060322">
    <property type="term" value="P:head development"/>
    <property type="evidence" value="ECO:0000266"/>
    <property type="project" value="RGD"/>
</dbReference>
<dbReference type="GO" id="GO:1902018">
    <property type="term" value="P:negative regulation of cilium assembly"/>
    <property type="evidence" value="ECO:0000250"/>
    <property type="project" value="UniProtKB"/>
</dbReference>
<dbReference type="GO" id="GO:1900182">
    <property type="term" value="P:positive regulation of protein localization to nucleus"/>
    <property type="evidence" value="ECO:0000250"/>
    <property type="project" value="UniProtKB"/>
</dbReference>
<dbReference type="GO" id="GO:0007286">
    <property type="term" value="P:spermatid development"/>
    <property type="evidence" value="ECO:0000304"/>
    <property type="project" value="RGD"/>
</dbReference>
<dbReference type="GO" id="GO:0007283">
    <property type="term" value="P:spermatogenesis"/>
    <property type="evidence" value="ECO:0000266"/>
    <property type="project" value="RGD"/>
</dbReference>
<dbReference type="CDD" id="cd09465">
    <property type="entry name" value="LIM2_LIMK2"/>
    <property type="match status" value="1"/>
</dbReference>
<dbReference type="CDD" id="cd06754">
    <property type="entry name" value="PDZ_LIMK-like"/>
    <property type="match status" value="1"/>
</dbReference>
<dbReference type="CDD" id="cd14222">
    <property type="entry name" value="STKc_LIMK2"/>
    <property type="match status" value="1"/>
</dbReference>
<dbReference type="FunFam" id="2.10.110.10:FF:000038">
    <property type="entry name" value="LIM domain kinase 2"/>
    <property type="match status" value="1"/>
</dbReference>
<dbReference type="FunFam" id="2.10.110.10:FF:000090">
    <property type="entry name" value="LIM domain kinase 2"/>
    <property type="match status" value="1"/>
</dbReference>
<dbReference type="FunFam" id="3.30.200.20:FF:000038">
    <property type="entry name" value="LIM domain kinase 2"/>
    <property type="match status" value="1"/>
</dbReference>
<dbReference type="FunFam" id="1.10.510.10:FF:000197">
    <property type="entry name" value="LIM domain kinase 2 isoform X1"/>
    <property type="match status" value="1"/>
</dbReference>
<dbReference type="FunFam" id="2.30.42.10:FF:000082">
    <property type="entry name" value="LIM domain kinase 2 isoform X2"/>
    <property type="match status" value="1"/>
</dbReference>
<dbReference type="Gene3D" id="2.30.42.10">
    <property type="match status" value="1"/>
</dbReference>
<dbReference type="Gene3D" id="2.10.110.10">
    <property type="entry name" value="Cysteine Rich Protein"/>
    <property type="match status" value="2"/>
</dbReference>
<dbReference type="Gene3D" id="3.30.200.20">
    <property type="entry name" value="Phosphorylase Kinase, domain 1"/>
    <property type="match status" value="1"/>
</dbReference>
<dbReference type="Gene3D" id="1.10.510.10">
    <property type="entry name" value="Transferase(Phosphotransferase) domain 1"/>
    <property type="match status" value="1"/>
</dbReference>
<dbReference type="InterPro" id="IPR050940">
    <property type="entry name" value="Actin_reg-Ser/Thr_kinase"/>
</dbReference>
<dbReference type="InterPro" id="IPR011009">
    <property type="entry name" value="Kinase-like_dom_sf"/>
</dbReference>
<dbReference type="InterPro" id="IPR001478">
    <property type="entry name" value="PDZ"/>
</dbReference>
<dbReference type="InterPro" id="IPR036034">
    <property type="entry name" value="PDZ_sf"/>
</dbReference>
<dbReference type="InterPro" id="IPR000719">
    <property type="entry name" value="Prot_kinase_dom"/>
</dbReference>
<dbReference type="InterPro" id="IPR017441">
    <property type="entry name" value="Protein_kinase_ATP_BS"/>
</dbReference>
<dbReference type="InterPro" id="IPR001245">
    <property type="entry name" value="Ser-Thr/Tyr_kinase_cat_dom"/>
</dbReference>
<dbReference type="InterPro" id="IPR001781">
    <property type="entry name" value="Znf_LIM"/>
</dbReference>
<dbReference type="PANTHER" id="PTHR46485">
    <property type="entry name" value="LIM DOMAIN KINASE 1"/>
    <property type="match status" value="1"/>
</dbReference>
<dbReference type="PANTHER" id="PTHR46485:SF1">
    <property type="entry name" value="LIM DOMAIN KINASE 2"/>
    <property type="match status" value="1"/>
</dbReference>
<dbReference type="Pfam" id="PF00412">
    <property type="entry name" value="LIM"/>
    <property type="match status" value="2"/>
</dbReference>
<dbReference type="Pfam" id="PF00595">
    <property type="entry name" value="PDZ"/>
    <property type="match status" value="1"/>
</dbReference>
<dbReference type="Pfam" id="PF07714">
    <property type="entry name" value="PK_Tyr_Ser-Thr"/>
    <property type="match status" value="1"/>
</dbReference>
<dbReference type="SMART" id="SM00132">
    <property type="entry name" value="LIM"/>
    <property type="match status" value="2"/>
</dbReference>
<dbReference type="SMART" id="SM00228">
    <property type="entry name" value="PDZ"/>
    <property type="match status" value="1"/>
</dbReference>
<dbReference type="SUPFAM" id="SSF57716">
    <property type="entry name" value="Glucocorticoid receptor-like (DNA-binding domain)"/>
    <property type="match status" value="2"/>
</dbReference>
<dbReference type="SUPFAM" id="SSF50156">
    <property type="entry name" value="PDZ domain-like"/>
    <property type="match status" value="1"/>
</dbReference>
<dbReference type="SUPFAM" id="SSF56112">
    <property type="entry name" value="Protein kinase-like (PK-like)"/>
    <property type="match status" value="1"/>
</dbReference>
<dbReference type="PROSITE" id="PS00478">
    <property type="entry name" value="LIM_DOMAIN_1"/>
    <property type="match status" value="2"/>
</dbReference>
<dbReference type="PROSITE" id="PS50023">
    <property type="entry name" value="LIM_DOMAIN_2"/>
    <property type="match status" value="2"/>
</dbReference>
<dbReference type="PROSITE" id="PS50106">
    <property type="entry name" value="PDZ"/>
    <property type="match status" value="1"/>
</dbReference>
<dbReference type="PROSITE" id="PS00107">
    <property type="entry name" value="PROTEIN_KINASE_ATP"/>
    <property type="match status" value="1"/>
</dbReference>
<dbReference type="PROSITE" id="PS50011">
    <property type="entry name" value="PROTEIN_KINASE_DOM"/>
    <property type="match status" value="1"/>
</dbReference>
<gene>
    <name type="primary">Limk2</name>
</gene>
<accession>P53670</accession>
<reference key="1">
    <citation type="journal article" date="1995" name="Oncogene">
        <title>LIMK-1 and LIMK-2, two members of a LIM motif-containing protein kinase family.</title>
        <authorList>
            <person name="Nunoue K."/>
            <person name="Ohashi K."/>
            <person name="Okano I."/>
            <person name="Mizuno K."/>
        </authorList>
    </citation>
    <scope>NUCLEOTIDE SEQUENCE [MRNA] (ISOFORMS LIMK2A; LIMK2B; LIMK2C AND LIMK2D)</scope>
    <source>
        <strain>Wistar</strain>
        <tissue>Brain</tissue>
    </source>
</reference>
<protein>
    <recommendedName>
        <fullName>LIM domain kinase 2</fullName>
        <shortName>LIMK-2</shortName>
        <ecNumber evidence="1">2.7.11.1</ecNumber>
    </recommendedName>
</protein>
<evidence type="ECO:0000250" key="1">
    <source>
        <dbReference type="UniProtKB" id="P53671"/>
    </source>
</evidence>
<evidence type="ECO:0000250" key="2">
    <source>
        <dbReference type="UniProtKB" id="Q8BJ34"/>
    </source>
</evidence>
<evidence type="ECO:0000255" key="3">
    <source>
        <dbReference type="PROSITE-ProRule" id="PRU00125"/>
    </source>
</evidence>
<evidence type="ECO:0000255" key="4">
    <source>
        <dbReference type="PROSITE-ProRule" id="PRU00143"/>
    </source>
</evidence>
<evidence type="ECO:0000255" key="5">
    <source>
        <dbReference type="PROSITE-ProRule" id="PRU00159"/>
    </source>
</evidence>
<evidence type="ECO:0000256" key="6">
    <source>
        <dbReference type="SAM" id="MobiDB-lite"/>
    </source>
</evidence>
<evidence type="ECO:0000303" key="7">
    <source>
    </source>
</evidence>
<evidence type="ECO:0000305" key="8"/>